<proteinExistence type="inferred from homology"/>
<keyword id="KW-0963">Cytoplasm</keyword>
<keyword id="KW-0227">DNA damage</keyword>
<keyword id="KW-0233">DNA recombination</keyword>
<keyword id="KW-0234">DNA repair</keyword>
<keyword id="KW-0238">DNA-binding</keyword>
<keyword id="KW-0742">SOS response</keyword>
<name>RUVA_ECOBW</name>
<organism>
    <name type="scientific">Escherichia coli (strain K12 / MC4100 / BW2952)</name>
    <dbReference type="NCBI Taxonomy" id="595496"/>
    <lineage>
        <taxon>Bacteria</taxon>
        <taxon>Pseudomonadati</taxon>
        <taxon>Pseudomonadota</taxon>
        <taxon>Gammaproteobacteria</taxon>
        <taxon>Enterobacterales</taxon>
        <taxon>Enterobacteriaceae</taxon>
        <taxon>Escherichia</taxon>
    </lineage>
</organism>
<reference key="1">
    <citation type="journal article" date="2009" name="J. Bacteriol.">
        <title>Genomic sequencing reveals regulatory mutations and recombinational events in the widely used MC4100 lineage of Escherichia coli K-12.</title>
        <authorList>
            <person name="Ferenci T."/>
            <person name="Zhou Z."/>
            <person name="Betteridge T."/>
            <person name="Ren Y."/>
            <person name="Liu Y."/>
            <person name="Feng L."/>
            <person name="Reeves P.R."/>
            <person name="Wang L."/>
        </authorList>
    </citation>
    <scope>NUCLEOTIDE SEQUENCE [LARGE SCALE GENOMIC DNA]</scope>
    <source>
        <strain>K12 / MC4100 / BW2952</strain>
    </source>
</reference>
<dbReference type="EMBL" id="CP001396">
    <property type="protein sequence ID" value="ACR62167.1"/>
    <property type="molecule type" value="Genomic_DNA"/>
</dbReference>
<dbReference type="RefSeq" id="WP_000580323.1">
    <property type="nucleotide sequence ID" value="NC_012759.1"/>
</dbReference>
<dbReference type="SMR" id="C4ZQE5"/>
<dbReference type="GeneID" id="75057740"/>
<dbReference type="KEGG" id="ebw:BWG_1675"/>
<dbReference type="HOGENOM" id="CLU_087936_0_0_6"/>
<dbReference type="GO" id="GO:0005737">
    <property type="term" value="C:cytoplasm"/>
    <property type="evidence" value="ECO:0007669"/>
    <property type="project" value="UniProtKB-SubCell"/>
</dbReference>
<dbReference type="GO" id="GO:0009379">
    <property type="term" value="C:Holliday junction helicase complex"/>
    <property type="evidence" value="ECO:0007669"/>
    <property type="project" value="InterPro"/>
</dbReference>
<dbReference type="GO" id="GO:0048476">
    <property type="term" value="C:Holliday junction resolvase complex"/>
    <property type="evidence" value="ECO:0007669"/>
    <property type="project" value="UniProtKB-UniRule"/>
</dbReference>
<dbReference type="GO" id="GO:0005524">
    <property type="term" value="F:ATP binding"/>
    <property type="evidence" value="ECO:0007669"/>
    <property type="project" value="InterPro"/>
</dbReference>
<dbReference type="GO" id="GO:0000400">
    <property type="term" value="F:four-way junction DNA binding"/>
    <property type="evidence" value="ECO:0007669"/>
    <property type="project" value="UniProtKB-UniRule"/>
</dbReference>
<dbReference type="GO" id="GO:0009378">
    <property type="term" value="F:four-way junction helicase activity"/>
    <property type="evidence" value="ECO:0007669"/>
    <property type="project" value="InterPro"/>
</dbReference>
<dbReference type="GO" id="GO:0006310">
    <property type="term" value="P:DNA recombination"/>
    <property type="evidence" value="ECO:0007669"/>
    <property type="project" value="UniProtKB-UniRule"/>
</dbReference>
<dbReference type="GO" id="GO:0006281">
    <property type="term" value="P:DNA repair"/>
    <property type="evidence" value="ECO:0007669"/>
    <property type="project" value="UniProtKB-UniRule"/>
</dbReference>
<dbReference type="GO" id="GO:0009432">
    <property type="term" value="P:SOS response"/>
    <property type="evidence" value="ECO:0007669"/>
    <property type="project" value="UniProtKB-UniRule"/>
</dbReference>
<dbReference type="CDD" id="cd14332">
    <property type="entry name" value="UBA_RuvA_C"/>
    <property type="match status" value="1"/>
</dbReference>
<dbReference type="FunFam" id="1.10.150.20:FF:000012">
    <property type="entry name" value="Holliday junction ATP-dependent DNA helicase RuvA"/>
    <property type="match status" value="1"/>
</dbReference>
<dbReference type="FunFam" id="1.10.8.10:FF:000008">
    <property type="entry name" value="Holliday junction ATP-dependent DNA helicase RuvA"/>
    <property type="match status" value="1"/>
</dbReference>
<dbReference type="FunFam" id="2.40.50.140:FF:000083">
    <property type="entry name" value="Holliday junction ATP-dependent DNA helicase RuvA"/>
    <property type="match status" value="1"/>
</dbReference>
<dbReference type="Gene3D" id="1.10.150.20">
    <property type="entry name" value="5' to 3' exonuclease, C-terminal subdomain"/>
    <property type="match status" value="1"/>
</dbReference>
<dbReference type="Gene3D" id="1.10.8.10">
    <property type="entry name" value="DNA helicase RuvA subunit, C-terminal domain"/>
    <property type="match status" value="1"/>
</dbReference>
<dbReference type="Gene3D" id="2.40.50.140">
    <property type="entry name" value="Nucleic acid-binding proteins"/>
    <property type="match status" value="1"/>
</dbReference>
<dbReference type="HAMAP" id="MF_00031">
    <property type="entry name" value="DNA_HJ_migration_RuvA"/>
    <property type="match status" value="1"/>
</dbReference>
<dbReference type="InterPro" id="IPR013849">
    <property type="entry name" value="DNA_helicase_Holl-junc_RuvA_I"/>
</dbReference>
<dbReference type="InterPro" id="IPR003583">
    <property type="entry name" value="Hlx-hairpin-Hlx_DNA-bd_motif"/>
</dbReference>
<dbReference type="InterPro" id="IPR012340">
    <property type="entry name" value="NA-bd_OB-fold"/>
</dbReference>
<dbReference type="InterPro" id="IPR000085">
    <property type="entry name" value="RuvA"/>
</dbReference>
<dbReference type="InterPro" id="IPR010994">
    <property type="entry name" value="RuvA_2-like"/>
</dbReference>
<dbReference type="InterPro" id="IPR011114">
    <property type="entry name" value="RuvA_C"/>
</dbReference>
<dbReference type="InterPro" id="IPR036267">
    <property type="entry name" value="RuvA_C_sf"/>
</dbReference>
<dbReference type="NCBIfam" id="TIGR00084">
    <property type="entry name" value="ruvA"/>
    <property type="match status" value="1"/>
</dbReference>
<dbReference type="Pfam" id="PF14520">
    <property type="entry name" value="HHH_5"/>
    <property type="match status" value="1"/>
</dbReference>
<dbReference type="Pfam" id="PF07499">
    <property type="entry name" value="RuvA_C"/>
    <property type="match status" value="1"/>
</dbReference>
<dbReference type="Pfam" id="PF01330">
    <property type="entry name" value="RuvA_N"/>
    <property type="match status" value="1"/>
</dbReference>
<dbReference type="SMART" id="SM00278">
    <property type="entry name" value="HhH1"/>
    <property type="match status" value="2"/>
</dbReference>
<dbReference type="SUPFAM" id="SSF46929">
    <property type="entry name" value="DNA helicase RuvA subunit, C-terminal domain"/>
    <property type="match status" value="1"/>
</dbReference>
<dbReference type="SUPFAM" id="SSF50249">
    <property type="entry name" value="Nucleic acid-binding proteins"/>
    <property type="match status" value="1"/>
</dbReference>
<dbReference type="SUPFAM" id="SSF47781">
    <property type="entry name" value="RuvA domain 2-like"/>
    <property type="match status" value="1"/>
</dbReference>
<gene>
    <name evidence="1" type="primary">ruvA</name>
    <name type="ordered locus">BWG_1675</name>
</gene>
<evidence type="ECO:0000255" key="1">
    <source>
        <dbReference type="HAMAP-Rule" id="MF_00031"/>
    </source>
</evidence>
<protein>
    <recommendedName>
        <fullName evidence="1">Holliday junction branch migration complex subunit RuvA</fullName>
    </recommendedName>
</protein>
<accession>C4ZQE5</accession>
<comment type="function">
    <text evidence="1">The RuvA-RuvB-RuvC complex processes Holliday junction (HJ) DNA during genetic recombination and DNA repair, while the RuvA-RuvB complex plays an important role in the rescue of blocked DNA replication forks via replication fork reversal (RFR). RuvA specifically binds to HJ cruciform DNA, conferring on it an open structure. The RuvB hexamer acts as an ATP-dependent pump, pulling dsDNA into and through the RuvAB complex. HJ branch migration allows RuvC to scan DNA until it finds its consensus sequence, where it cleaves and resolves the cruciform DNA.</text>
</comment>
<comment type="subunit">
    <text evidence="1">Homotetramer. Forms an RuvA(8)-RuvB(12)-Holliday junction (HJ) complex. HJ DNA is sandwiched between 2 RuvA tetramers; dsDNA enters through RuvA and exits via RuvB. An RuvB hexamer assembles on each DNA strand where it exits the tetramer. Each RuvB hexamer is contacted by two RuvA subunits (via domain III) on 2 adjacent RuvB subunits; this complex drives branch migration. In the full resolvosome a probable DNA-RuvA(4)-RuvB(12)-RuvC(2) complex forms which resolves the HJ.</text>
</comment>
<comment type="subcellular location">
    <subcellularLocation>
        <location evidence="1">Cytoplasm</location>
    </subcellularLocation>
</comment>
<comment type="domain">
    <text evidence="1">Has three domains with a flexible linker between the domains II and III and assumes an 'L' shape. Domain III is highly mobile and contacts RuvB.</text>
</comment>
<comment type="similarity">
    <text evidence="1">Belongs to the RuvA family.</text>
</comment>
<sequence length="203" mass="22086">MIGRLRGIIIEKQPPLVLIEVGGVGYEVHMPMTCFYELPEAGQEAIVFTHFVVREDAQLLYGFNNKQERTLFKELIKTNGVGPKLALAILSGMSAQQFVNAVEREEVGALVKLPGIGKKTAERLIVEMKDRFKGLHGDLFTPAADLVLTSPASPATDDAEQEAVAALVALGYKPQEASRMVSKIARPDASSETLIREALRAAL</sequence>
<feature type="chain" id="PRO_1000201988" description="Holliday junction branch migration complex subunit RuvA">
    <location>
        <begin position="1"/>
        <end position="203"/>
    </location>
</feature>
<feature type="region of interest" description="Domain I" evidence="1">
    <location>
        <begin position="1"/>
        <end position="64"/>
    </location>
</feature>
<feature type="region of interest" description="Domain II" evidence="1">
    <location>
        <begin position="65"/>
        <end position="142"/>
    </location>
</feature>
<feature type="region of interest" description="Flexible linker" evidence="1">
    <location>
        <begin position="143"/>
        <end position="154"/>
    </location>
</feature>
<feature type="region of interest" description="Domain III" evidence="1">
    <location>
        <begin position="155"/>
        <end position="203"/>
    </location>
</feature>